<keyword id="KW-0002">3D-structure</keyword>
<keyword id="KW-0275">Fatty acid biosynthesis</keyword>
<keyword id="KW-0276">Fatty acid metabolism</keyword>
<keyword id="KW-0444">Lipid biosynthesis</keyword>
<keyword id="KW-0443">Lipid metabolism</keyword>
<keyword id="KW-0449">Lipoprotein</keyword>
<keyword id="KW-0519">Myristate</keyword>
<keyword id="KW-0597">Phosphoprotein</keyword>
<keyword id="KW-1267">Proteomics identification</keyword>
<keyword id="KW-1185">Reference proteome</keyword>
<reference key="1">
    <citation type="submission" date="1998-02" db="EMBL/GenBank/DDBJ databases">
        <title>Non-catalytic beta and gamma subunits isoforms of the AMP-activated protein kinase.</title>
        <authorList>
            <person name="Carling D."/>
        </authorList>
    </citation>
    <scope>NUCLEOTIDE SEQUENCE [MRNA]</scope>
</reference>
<reference key="2">
    <citation type="journal article" date="1997" name="FEBS Lett.">
        <title>AMP-activated protein kinase isoenzyme family: subunit structure and chromosomal location.</title>
        <authorList>
            <person name="Stapleton D."/>
            <person name="Woollatt E."/>
            <person name="Mitchelhill K."/>
            <person name="Nicholl J.K."/>
            <person name="Fernandez C.S."/>
            <person name="Michell B.J."/>
            <person name="Witters L.A."/>
            <person name="Power D.A."/>
            <person name="Sutherland G.R."/>
            <person name="Kemp B.E."/>
        </authorList>
    </citation>
    <scope>NUCLEOTIDE SEQUENCE [MRNA]</scope>
    <source>
        <tissue>Brain</tissue>
    </source>
</reference>
<reference key="3">
    <citation type="submission" date="1997-01" db="EMBL/GenBank/DDBJ databases">
        <title>Transcription map of the 5cM region surrounding the hepatocyte nuclear factor-1a/MODY3 gene on chromosome 12.</title>
        <authorList>
            <person name="Yamagata K."/>
            <person name="Oda N."/>
            <person name="Furuta H."/>
            <person name="Vaxillaire M."/>
            <person name="Southam L."/>
            <person name="Boriraj V."/>
            <person name="Chen X."/>
            <person name="Oda Y."/>
            <person name="Takeda J."/>
            <person name="Yamada S."/>
            <person name="Nishigori H."/>
            <person name="Lebeau M.M."/>
            <person name="Lathrop M."/>
            <person name="Cox R.D."/>
            <person name="Bell G.I."/>
        </authorList>
    </citation>
    <scope>NUCLEOTIDE SEQUENCE [GENOMIC DNA / MRNA]</scope>
</reference>
<reference key="4">
    <citation type="submission" date="1999-01" db="EMBL/GenBank/DDBJ databases">
        <title>Cloning and expression of the complete mRNA coding human AMP-activated protein kinase.</title>
        <authorList>
            <person name="Wang X."/>
            <person name="Yu L."/>
            <person name="Tu Q."/>
        </authorList>
    </citation>
    <scope>NUCLEOTIDE SEQUENCE [MRNA]</scope>
</reference>
<reference key="5">
    <citation type="journal article" date="2006" name="Nature">
        <title>The finished DNA sequence of human chromosome 12.</title>
        <authorList>
            <person name="Scherer S.E."/>
            <person name="Muzny D.M."/>
            <person name="Buhay C.J."/>
            <person name="Chen R."/>
            <person name="Cree A."/>
            <person name="Ding Y."/>
            <person name="Dugan-Rocha S."/>
            <person name="Gill R."/>
            <person name="Gunaratne P."/>
            <person name="Harris R.A."/>
            <person name="Hawes A.C."/>
            <person name="Hernandez J."/>
            <person name="Hodgson A.V."/>
            <person name="Hume J."/>
            <person name="Jackson A."/>
            <person name="Khan Z.M."/>
            <person name="Kovar-Smith C."/>
            <person name="Lewis L.R."/>
            <person name="Lozado R.J."/>
            <person name="Metzker M.L."/>
            <person name="Milosavljevic A."/>
            <person name="Miner G.R."/>
            <person name="Montgomery K.T."/>
            <person name="Morgan M.B."/>
            <person name="Nazareth L.V."/>
            <person name="Scott G."/>
            <person name="Sodergren E."/>
            <person name="Song X.-Z."/>
            <person name="Steffen D."/>
            <person name="Lovering R.C."/>
            <person name="Wheeler D.A."/>
            <person name="Worley K.C."/>
            <person name="Yuan Y."/>
            <person name="Zhang Z."/>
            <person name="Adams C.Q."/>
            <person name="Ansari-Lari M.A."/>
            <person name="Ayele M."/>
            <person name="Brown M.J."/>
            <person name="Chen G."/>
            <person name="Chen Z."/>
            <person name="Clerc-Blankenburg K.P."/>
            <person name="Davis C."/>
            <person name="Delgado O."/>
            <person name="Dinh H.H."/>
            <person name="Draper H."/>
            <person name="Gonzalez-Garay M.L."/>
            <person name="Havlak P."/>
            <person name="Jackson L.R."/>
            <person name="Jacob L.S."/>
            <person name="Kelly S.H."/>
            <person name="Li L."/>
            <person name="Li Z."/>
            <person name="Liu J."/>
            <person name="Liu W."/>
            <person name="Lu J."/>
            <person name="Maheshwari M."/>
            <person name="Nguyen B.-V."/>
            <person name="Okwuonu G.O."/>
            <person name="Pasternak S."/>
            <person name="Perez L.M."/>
            <person name="Plopper F.J.H."/>
            <person name="Santibanez J."/>
            <person name="Shen H."/>
            <person name="Tabor P.E."/>
            <person name="Verduzco D."/>
            <person name="Waldron L."/>
            <person name="Wang Q."/>
            <person name="Williams G.A."/>
            <person name="Zhang J."/>
            <person name="Zhou J."/>
            <person name="Allen C.C."/>
            <person name="Amin A.G."/>
            <person name="Anyalebechi V."/>
            <person name="Bailey M."/>
            <person name="Barbaria J.A."/>
            <person name="Bimage K.E."/>
            <person name="Bryant N.P."/>
            <person name="Burch P.E."/>
            <person name="Burkett C.E."/>
            <person name="Burrell K.L."/>
            <person name="Calderon E."/>
            <person name="Cardenas V."/>
            <person name="Carter K."/>
            <person name="Casias K."/>
            <person name="Cavazos I."/>
            <person name="Cavazos S.R."/>
            <person name="Ceasar H."/>
            <person name="Chacko J."/>
            <person name="Chan S.N."/>
            <person name="Chavez D."/>
            <person name="Christopoulos C."/>
            <person name="Chu J."/>
            <person name="Cockrell R."/>
            <person name="Cox C.D."/>
            <person name="Dang M."/>
            <person name="Dathorne S.R."/>
            <person name="David R."/>
            <person name="Davis C.M."/>
            <person name="Davy-Carroll L."/>
            <person name="Deshazo D.R."/>
            <person name="Donlin J.E."/>
            <person name="D'Souza L."/>
            <person name="Eaves K.A."/>
            <person name="Egan A."/>
            <person name="Emery-Cohen A.J."/>
            <person name="Escotto M."/>
            <person name="Flagg N."/>
            <person name="Forbes L.D."/>
            <person name="Gabisi A.M."/>
            <person name="Garza M."/>
            <person name="Hamilton C."/>
            <person name="Henderson N."/>
            <person name="Hernandez O."/>
            <person name="Hines S."/>
            <person name="Hogues M.E."/>
            <person name="Huang M."/>
            <person name="Idlebird D.G."/>
            <person name="Johnson R."/>
            <person name="Jolivet A."/>
            <person name="Jones S."/>
            <person name="Kagan R."/>
            <person name="King L.M."/>
            <person name="Leal B."/>
            <person name="Lebow H."/>
            <person name="Lee S."/>
            <person name="LeVan J.M."/>
            <person name="Lewis L.C."/>
            <person name="London P."/>
            <person name="Lorensuhewa L.M."/>
            <person name="Loulseged H."/>
            <person name="Lovett D.A."/>
            <person name="Lucier A."/>
            <person name="Lucier R.L."/>
            <person name="Ma J."/>
            <person name="Madu R.C."/>
            <person name="Mapua P."/>
            <person name="Martindale A.D."/>
            <person name="Martinez E."/>
            <person name="Massey E."/>
            <person name="Mawhiney S."/>
            <person name="Meador M.G."/>
            <person name="Mendez S."/>
            <person name="Mercado C."/>
            <person name="Mercado I.C."/>
            <person name="Merritt C.E."/>
            <person name="Miner Z.L."/>
            <person name="Minja E."/>
            <person name="Mitchell T."/>
            <person name="Mohabbat F."/>
            <person name="Mohabbat K."/>
            <person name="Montgomery B."/>
            <person name="Moore N."/>
            <person name="Morris S."/>
            <person name="Munidasa M."/>
            <person name="Ngo R.N."/>
            <person name="Nguyen N.B."/>
            <person name="Nickerson E."/>
            <person name="Nwaokelemeh O.O."/>
            <person name="Nwokenkwo S."/>
            <person name="Obregon M."/>
            <person name="Oguh M."/>
            <person name="Oragunye N."/>
            <person name="Oviedo R.J."/>
            <person name="Parish B.J."/>
            <person name="Parker D.N."/>
            <person name="Parrish J."/>
            <person name="Parks K.L."/>
            <person name="Paul H.A."/>
            <person name="Payton B.A."/>
            <person name="Perez A."/>
            <person name="Perrin W."/>
            <person name="Pickens A."/>
            <person name="Primus E.L."/>
            <person name="Pu L.-L."/>
            <person name="Puazo M."/>
            <person name="Quiles M.M."/>
            <person name="Quiroz J.B."/>
            <person name="Rabata D."/>
            <person name="Reeves K."/>
            <person name="Ruiz S.J."/>
            <person name="Shao H."/>
            <person name="Sisson I."/>
            <person name="Sonaike T."/>
            <person name="Sorelle R.P."/>
            <person name="Sutton A.E."/>
            <person name="Svatek A.F."/>
            <person name="Svetz L.A."/>
            <person name="Tamerisa K.S."/>
            <person name="Taylor T.R."/>
            <person name="Teague B."/>
            <person name="Thomas N."/>
            <person name="Thorn R.D."/>
            <person name="Trejos Z.Y."/>
            <person name="Trevino B.K."/>
            <person name="Ukegbu O.N."/>
            <person name="Urban J.B."/>
            <person name="Vasquez L.I."/>
            <person name="Vera V.A."/>
            <person name="Villasana D.M."/>
            <person name="Wang L."/>
            <person name="Ward-Moore S."/>
            <person name="Warren J.T."/>
            <person name="Wei X."/>
            <person name="White F."/>
            <person name="Williamson A.L."/>
            <person name="Wleczyk R."/>
            <person name="Wooden H.S."/>
            <person name="Wooden S.H."/>
            <person name="Yen J."/>
            <person name="Yoon L."/>
            <person name="Yoon V."/>
            <person name="Zorrilla S.E."/>
            <person name="Nelson D."/>
            <person name="Kucherlapati R."/>
            <person name="Weinstock G."/>
            <person name="Gibbs R.A."/>
        </authorList>
    </citation>
    <scope>NUCLEOTIDE SEQUENCE [LARGE SCALE GENOMIC DNA]</scope>
</reference>
<reference key="6">
    <citation type="journal article" date="2004" name="Genome Res.">
        <title>The status, quality, and expansion of the NIH full-length cDNA project: the Mammalian Gene Collection (MGC).</title>
        <authorList>
            <consortium name="The MGC Project Team"/>
        </authorList>
    </citation>
    <scope>NUCLEOTIDE SEQUENCE [LARGE SCALE MRNA]</scope>
    <source>
        <tissue>Lung</tissue>
        <tissue>Muscle</tissue>
    </source>
</reference>
<reference key="7">
    <citation type="journal article" date="2006" name="Proc. Natl. Acad. Sci. U.S.A.">
        <title>Folliculin encoded by the BHD gene interacts with a binding protein, FNIP1, and AMPK, and is involved in AMPK and mTOR signaling.</title>
        <authorList>
            <person name="Baba M."/>
            <person name="Hong S.-B."/>
            <person name="Sharma N."/>
            <person name="Warren M.B."/>
            <person name="Nickerson M.L."/>
            <person name="Iwamatsu A."/>
            <person name="Esposito D."/>
            <person name="Gillette W.K."/>
            <person name="Hopkins R.F. III"/>
            <person name="Hartley J.L."/>
            <person name="Furihata M."/>
            <person name="Oishi S."/>
            <person name="Zhen W."/>
            <person name="Burke T.R. Jr."/>
            <person name="Linehan W.M."/>
            <person name="Schmidt L.S."/>
            <person name="Zbar B."/>
        </authorList>
    </citation>
    <scope>INTERACTION WITH FNIP1</scope>
</reference>
<reference key="8">
    <citation type="journal article" date="2008" name="Gene">
        <title>Identification and characterization of a novel folliculin-interacting protein FNIP2.</title>
        <authorList>
            <person name="Hasumi H."/>
            <person name="Baba M."/>
            <person name="Hong S.-B."/>
            <person name="Hasumi Y."/>
            <person name="Huang Y."/>
            <person name="Yao M."/>
            <person name="Valera V.A."/>
            <person name="Linehan W.M."/>
            <person name="Schmidt L.S."/>
        </authorList>
    </citation>
    <scope>INTERACTION WITH FNIP2</scope>
</reference>
<reference key="9">
    <citation type="journal article" date="2008" name="J. Proteome Res.">
        <title>Phosphoproteome of resting human platelets.</title>
        <authorList>
            <person name="Zahedi R.P."/>
            <person name="Lewandrowski U."/>
            <person name="Wiesner J."/>
            <person name="Wortelkamp S."/>
            <person name="Moebius J."/>
            <person name="Schuetz C."/>
            <person name="Walter U."/>
            <person name="Gambaryan S."/>
            <person name="Sickmann A."/>
        </authorList>
    </citation>
    <scope>PHOSPHORYLATION [LARGE SCALE ANALYSIS] AT THR-4; SER-5; SER-6 AND SER-108</scope>
    <scope>IDENTIFICATION BY MASS SPECTROMETRY [LARGE SCALE ANALYSIS]</scope>
    <source>
        <tissue>Platelet</tissue>
    </source>
</reference>
<reference key="10">
    <citation type="journal article" date="2008" name="Mol. Cell">
        <title>Kinase-selective enrichment enables quantitative phosphoproteomics of the kinome across the cell cycle.</title>
        <authorList>
            <person name="Daub H."/>
            <person name="Olsen J.V."/>
            <person name="Bairlein M."/>
            <person name="Gnad F."/>
            <person name="Oppermann F.S."/>
            <person name="Korner R."/>
            <person name="Greff Z."/>
            <person name="Keri G."/>
            <person name="Stemmann O."/>
            <person name="Mann M."/>
        </authorList>
    </citation>
    <scope>PHOSPHORYLATION [LARGE SCALE ANALYSIS] AT THR-19; SER-40 AND SER-108</scope>
    <scope>IDENTIFICATION BY MASS SPECTROMETRY [LARGE SCALE ANALYSIS]</scope>
    <source>
        <tissue>Cervix carcinoma</tissue>
    </source>
</reference>
<reference key="11">
    <citation type="journal article" date="2008" name="Proc. Natl. Acad. Sci. U.S.A.">
        <title>A quantitative atlas of mitotic phosphorylation.</title>
        <authorList>
            <person name="Dephoure N."/>
            <person name="Zhou C."/>
            <person name="Villen J."/>
            <person name="Beausoleil S.A."/>
            <person name="Bakalarski C.E."/>
            <person name="Elledge S.J."/>
            <person name="Gygi S.P."/>
        </authorList>
    </citation>
    <scope>PHOSPHORYLATION [LARGE SCALE ANALYSIS] AT SER-108</scope>
    <scope>IDENTIFICATION BY MASS SPECTROMETRY [LARGE SCALE ANALYSIS]</scope>
    <source>
        <tissue>Cervix carcinoma</tissue>
    </source>
</reference>
<reference key="12">
    <citation type="journal article" date="2009" name="Mol. Cell. Proteomics">
        <title>Large-scale proteomics analysis of the human kinome.</title>
        <authorList>
            <person name="Oppermann F.S."/>
            <person name="Gnad F."/>
            <person name="Olsen J.V."/>
            <person name="Hornberger R."/>
            <person name="Greff Z."/>
            <person name="Keri G."/>
            <person name="Mann M."/>
            <person name="Daub H."/>
        </authorList>
    </citation>
    <scope>PHOSPHORYLATION [LARGE SCALE ANALYSIS] AT THR-19; SER-40; SER-108 AND THR-148</scope>
    <scope>IDENTIFICATION BY MASS SPECTROMETRY [LARGE SCALE ANALYSIS]</scope>
</reference>
<reference key="13">
    <citation type="journal article" date="2009" name="Sci. Signal.">
        <title>Quantitative phosphoproteomic analysis of T cell receptor signaling reveals system-wide modulation of protein-protein interactions.</title>
        <authorList>
            <person name="Mayya V."/>
            <person name="Lundgren D.H."/>
            <person name="Hwang S.-I."/>
            <person name="Rezaul K."/>
            <person name="Wu L."/>
            <person name="Eng J.K."/>
            <person name="Rodionov V."/>
            <person name="Han D.K."/>
        </authorList>
    </citation>
    <scope>PHOSPHORYLATION [LARGE SCALE ANALYSIS] AT SER-96 AND SER-108</scope>
    <scope>IDENTIFICATION BY MASS SPECTROMETRY [LARGE SCALE ANALYSIS]</scope>
    <source>
        <tissue>Leukemic T-cell</tissue>
    </source>
</reference>
<reference key="14">
    <citation type="journal article" date="2010" name="Sci. Signal.">
        <title>Quantitative phosphoproteomics reveals widespread full phosphorylation site occupancy during mitosis.</title>
        <authorList>
            <person name="Olsen J.V."/>
            <person name="Vermeulen M."/>
            <person name="Santamaria A."/>
            <person name="Kumar C."/>
            <person name="Miller M.L."/>
            <person name="Jensen L.J."/>
            <person name="Gnad F."/>
            <person name="Cox J."/>
            <person name="Jensen T.S."/>
            <person name="Nigg E.A."/>
            <person name="Brunak S."/>
            <person name="Mann M."/>
        </authorList>
    </citation>
    <scope>PHOSPHORYLATION [LARGE SCALE ANALYSIS] AT SER-40 AND SER-108</scope>
    <scope>IDENTIFICATION BY MASS SPECTROMETRY [LARGE SCALE ANALYSIS]</scope>
    <source>
        <tissue>Cervix carcinoma</tissue>
    </source>
</reference>
<reference key="15">
    <citation type="journal article" date="2011" name="Autophagy">
        <title>Ulk1-mediated phosphorylation of AMPK constitutes a negative regulatory feedback loop.</title>
        <authorList>
            <person name="Loffler A.S."/>
            <person name="Alers S."/>
            <person name="Dieterle A.M."/>
            <person name="Keppeler H."/>
            <person name="Franz-Wachtel M."/>
            <person name="Kundu M."/>
            <person name="Campbell D.G."/>
            <person name="Wesselborg S."/>
            <person name="Alessi D.R."/>
            <person name="Stork B."/>
        </authorList>
    </citation>
    <scope>PHOSPHORYLATION BY ULK1</scope>
</reference>
<reference key="16">
    <citation type="journal article" date="2011" name="BMC Syst. Biol.">
        <title>Initial characterization of the human central proteome.</title>
        <authorList>
            <person name="Burkard T.R."/>
            <person name="Planyavsky M."/>
            <person name="Kaupe I."/>
            <person name="Breitwieser F.P."/>
            <person name="Buerckstuemmer T."/>
            <person name="Bennett K.L."/>
            <person name="Superti-Furga G."/>
            <person name="Colinge J."/>
        </authorList>
    </citation>
    <scope>IDENTIFICATION BY MASS SPECTROMETRY [LARGE SCALE ANALYSIS]</scope>
</reference>
<reference key="17">
    <citation type="journal article" date="2011" name="Sci. Signal.">
        <title>System-wide temporal characterization of the proteome and phosphoproteome of human embryonic stem cell differentiation.</title>
        <authorList>
            <person name="Rigbolt K.T."/>
            <person name="Prokhorova T.A."/>
            <person name="Akimov V."/>
            <person name="Henningsen J."/>
            <person name="Johansen P.T."/>
            <person name="Kratchmarova I."/>
            <person name="Kassem M."/>
            <person name="Mann M."/>
            <person name="Olsen J.V."/>
            <person name="Blagoev B."/>
        </authorList>
    </citation>
    <scope>PHOSPHORYLATION [LARGE SCALE ANALYSIS] AT SER-108</scope>
    <scope>IDENTIFICATION BY MASS SPECTROMETRY [LARGE SCALE ANALYSIS]</scope>
</reference>
<reference key="18">
    <citation type="journal article" date="2011" name="Science">
        <title>AMPK is a direct adenylate charge-regulated protein kinase.</title>
        <authorList>
            <person name="Oakhill J.S."/>
            <person name="Steel R."/>
            <person name="Chen Z.P."/>
            <person name="Scott J.W."/>
            <person name="Ling N."/>
            <person name="Tam S."/>
            <person name="Kemp B.E."/>
        </authorList>
    </citation>
    <scope>INTERACTION WITH PRKAA1 AND PRKAG1</scope>
    <scope>MUTAGENESIS OF GLY-2</scope>
    <scope>MYRISTOYLATION AT GLY-2</scope>
</reference>
<reference key="19">
    <citation type="journal article" date="2007" name="Circ. Res.">
        <title>AMP-activated protein kinase in metabolic control and insulin signaling.</title>
        <authorList>
            <person name="Towler M.C."/>
            <person name="Hardie D.G."/>
        </authorList>
    </citation>
    <scope>REVIEW ON FUNCTION</scope>
</reference>
<reference key="20">
    <citation type="journal article" date="2007" name="Nat. Rev. Mol. Cell Biol.">
        <title>AMP-activated/SNF1 protein kinases: conserved guardians of cellular energy.</title>
        <authorList>
            <person name="Hardie D.G."/>
        </authorList>
    </citation>
    <scope>REVIEW ON FUNCTION</scope>
</reference>
<reference key="21">
    <citation type="journal article" date="2013" name="J. Proteome Res.">
        <title>Toward a comprehensive characterization of a human cancer cell phosphoproteome.</title>
        <authorList>
            <person name="Zhou H."/>
            <person name="Di Palma S."/>
            <person name="Preisinger C."/>
            <person name="Peng M."/>
            <person name="Polat A.N."/>
            <person name="Heck A.J."/>
            <person name="Mohammed S."/>
        </authorList>
    </citation>
    <scope>PHOSPHORYLATION [LARGE SCALE ANALYSIS] AT SER-40; SER-96 AND SER-108</scope>
    <scope>IDENTIFICATION BY MASS SPECTROMETRY [LARGE SCALE ANALYSIS]</scope>
    <source>
        <tissue>Cervix carcinoma</tissue>
        <tissue>Erythroleukemia</tissue>
    </source>
</reference>
<reference key="22">
    <citation type="journal article" date="2014" name="J. Proteomics">
        <title>An enzyme assisted RP-RPLC approach for in-depth analysis of human liver phosphoproteome.</title>
        <authorList>
            <person name="Bian Y."/>
            <person name="Song C."/>
            <person name="Cheng K."/>
            <person name="Dong M."/>
            <person name="Wang F."/>
            <person name="Huang J."/>
            <person name="Sun D."/>
            <person name="Wang L."/>
            <person name="Ye M."/>
            <person name="Zou H."/>
        </authorList>
    </citation>
    <scope>PHOSPHORYLATION [LARGE SCALE ANALYSIS] AT SER-96 AND SER-108</scope>
    <scope>IDENTIFICATION BY MASS SPECTROMETRY [LARGE SCALE ANALYSIS]</scope>
    <source>
        <tissue>Liver</tissue>
    </source>
</reference>
<feature type="initiator methionine" description="Removed">
    <location>
        <position position="1"/>
    </location>
</feature>
<feature type="chain" id="PRO_0000204363" description="5'-AMP-activated protein kinase subunit beta-1">
    <location>
        <begin position="2"/>
        <end position="270"/>
    </location>
</feature>
<feature type="region of interest" description="Disordered" evidence="4">
    <location>
        <begin position="1"/>
        <end position="43"/>
    </location>
</feature>
<feature type="region of interest" description="Glycogen-binding domain" evidence="1">
    <location>
        <begin position="68"/>
        <end position="163"/>
    </location>
</feature>
<feature type="compositionally biased region" description="Basic and acidic residues" evidence="4">
    <location>
        <begin position="21"/>
        <end position="36"/>
    </location>
</feature>
<feature type="modified residue" description="Phosphothreonine" evidence="10">
    <location>
        <position position="4"/>
    </location>
</feature>
<feature type="modified residue" description="Phosphoserine" evidence="10">
    <location>
        <position position="5"/>
    </location>
</feature>
<feature type="modified residue" description="Phosphoserine" evidence="10">
    <location>
        <position position="6"/>
    </location>
</feature>
<feature type="modified residue" description="Phosphothreonine" evidence="12 13">
    <location>
        <position position="19"/>
    </location>
</feature>
<feature type="modified residue" description="Phosphoserine; by autocatalysis" evidence="2">
    <location>
        <position position="24"/>
    </location>
</feature>
<feature type="modified residue" description="Phosphoserine; by autocatalysis" evidence="2">
    <location>
        <position position="25"/>
    </location>
</feature>
<feature type="modified residue" description="Phosphoserine" evidence="12 13 15 17">
    <location>
        <position position="40"/>
    </location>
</feature>
<feature type="modified residue" description="Phosphoserine" evidence="14 17 18">
    <location>
        <position position="96"/>
    </location>
</feature>
<feature type="modified residue" description="Phosphoserine" evidence="2">
    <location>
        <position position="101"/>
    </location>
</feature>
<feature type="modified residue" description="Phosphoserine" evidence="10 11 12 13 14 15 16 17 18">
    <location>
        <position position="108"/>
    </location>
</feature>
<feature type="modified residue" description="Phosphothreonine" evidence="13">
    <location>
        <position position="148"/>
    </location>
</feature>
<feature type="modified residue" description="Phosphoserine" evidence="3">
    <location>
        <position position="182"/>
    </location>
</feature>
<feature type="lipid moiety-binding region" description="N-myristoyl glycine" evidence="8">
    <location>
        <position position="2"/>
    </location>
</feature>
<feature type="mutagenesis site" description="Abolishes myristoylation and AMP-enhanced phosphorylation of PRKAA1 or PRKAA2." evidence="8">
    <original>G</original>
    <variation>A</variation>
    <location>
        <position position="2"/>
    </location>
</feature>
<feature type="sequence conflict" description="In Ref. 2; CAA73146 and 4; AAC98897." evidence="9" ref="2 4">
    <original>A</original>
    <variation>G</variation>
    <location>
        <position position="10"/>
    </location>
</feature>
<feature type="sequence conflict" description="In Ref. 1; CAA12024." evidence="9" ref="1">
    <original>G</original>
    <variation>A</variation>
    <location>
        <position position="15"/>
    </location>
</feature>
<feature type="sequence conflict" description="In Ref. 2; CAA73146 and 4; AAC98897." evidence="9" ref="2 4">
    <original>P</original>
    <variation>A</variation>
    <location>
        <position position="20"/>
    </location>
</feature>
<feature type="sequence conflict" description="In Ref. 3; AAD09237/AAD00625." evidence="9" ref="3">
    <original>R</original>
    <variation>K</variation>
    <location>
        <position position="22"/>
    </location>
</feature>
<feature type="sequence conflict" description="In Ref. 3; AAD09237/AAD00625." evidence="9" ref="3">
    <original>E</original>
    <variation>Y</variation>
    <location>
        <position position="56"/>
    </location>
</feature>
<feature type="strand" evidence="22">
    <location>
        <begin position="79"/>
        <end position="84"/>
    </location>
</feature>
<feature type="strand" evidence="22">
    <location>
        <begin position="91"/>
        <end position="95"/>
    </location>
</feature>
<feature type="helix" evidence="22">
    <location>
        <begin position="96"/>
        <end position="98"/>
    </location>
</feature>
<feature type="strand" evidence="22">
    <location>
        <begin position="106"/>
        <end position="110"/>
    </location>
</feature>
<feature type="strand" evidence="22">
    <location>
        <begin position="112"/>
        <end position="117"/>
    </location>
</feature>
<feature type="strand" evidence="22">
    <location>
        <begin position="120"/>
        <end position="129"/>
    </location>
</feature>
<feature type="strand" evidence="22">
    <location>
        <begin position="132"/>
        <end position="134"/>
    </location>
</feature>
<feature type="strand" evidence="20">
    <location>
        <begin position="137"/>
        <end position="139"/>
    </location>
</feature>
<feature type="strand" evidence="22">
    <location>
        <begin position="141"/>
        <end position="143"/>
    </location>
</feature>
<feature type="strand" evidence="19">
    <location>
        <begin position="145"/>
        <end position="147"/>
    </location>
</feature>
<feature type="strand" evidence="22">
    <location>
        <begin position="149"/>
        <end position="155"/>
    </location>
</feature>
<feature type="helix" evidence="22">
    <location>
        <begin position="157"/>
        <end position="160"/>
    </location>
</feature>
<feature type="helix" evidence="22">
    <location>
        <begin position="162"/>
        <end position="179"/>
    </location>
</feature>
<feature type="helix" evidence="22">
    <location>
        <begin position="208"/>
        <end position="211"/>
    </location>
</feature>
<feature type="turn" evidence="22">
    <location>
        <begin position="214"/>
        <end position="216"/>
    </location>
</feature>
<feature type="strand" evidence="21">
    <location>
        <begin position="221"/>
        <end position="223"/>
    </location>
</feature>
<feature type="helix" evidence="22">
    <location>
        <begin position="233"/>
        <end position="235"/>
    </location>
</feature>
<feature type="strand" evidence="22">
    <location>
        <begin position="240"/>
        <end position="245"/>
    </location>
</feature>
<feature type="strand" evidence="22">
    <location>
        <begin position="248"/>
        <end position="257"/>
    </location>
</feature>
<feature type="strand" evidence="22">
    <location>
        <begin position="260"/>
        <end position="269"/>
    </location>
</feature>
<sequence>MGNTSSERAALERHGGHKTPRRDSSGGTKDGDRPKILMDSPEDADLFHSEEIKAPEKEEFLAWQHDLEVNDKAPAQARPTVFRWTGGGKEVYLSGSFNNWSKLPLTRSHNNFVAILDLPEGEHQYKFFVDGQWTHDPSEPIVTSQLGTVNNIIQVKKTDFEVFDALMVDSQKCSDVSELSSSPPGPYHQEPYVCKPEERFRAPPILPPHLLQVILNKDTGISCDPALLPEPNHVMLNHLYALSIKDGVMVLSATHRYKKKYVTTLLYKPI</sequence>
<comment type="function">
    <text>Non-catalytic subunit of AMP-activated protein kinase (AMPK), an energy sensor protein kinase that plays a key role in regulating cellular energy metabolism. In response to reduction of intracellular ATP levels, AMPK activates energy-producing pathways and inhibits energy-consuming processes: inhibits protein, carbohydrate and lipid biosynthesis, as well as cell growth and proliferation. AMPK acts via direct phosphorylation of metabolic enzymes, and by longer-term effects via phosphorylation of transcription regulators. Also acts as a regulator of cellular polarity by remodeling the actin cytoskeleton; probably by indirectly activating myosin. Beta non-catalytic subunit acts as a scaffold on which the AMPK complex assembles, via its C-terminus that bridges alpha (PRKAA1 or PRKAA2) and gamma subunits (PRKAG1, PRKAG2 or PRKAG3).</text>
</comment>
<comment type="subunit">
    <text evidence="5 6 8">AMPK is a heterotrimer of an alpha catalytic subunit (PRKAA1 or PRKAA2), a beta (PRKAB1 or PRKAB2) and a gamma non-catalytic subunits (PRKAG1, PRKAG2 or PRKAG3). Interacts with FNIP1 and FNIP2.</text>
</comment>
<comment type="interaction">
    <interactant intactId="EBI-719769">
        <id>Q9Y478</id>
    </interactant>
    <interactant intactId="EBI-401755">
        <id>P62993</id>
        <label>GRB2</label>
    </interactant>
    <organismsDiffer>false</organismsDiffer>
    <experiments>2</experiments>
</comment>
<comment type="interaction">
    <interactant intactId="EBI-719769">
        <id>Q9Y478</id>
    </interactant>
    <interactant intactId="EBI-1181405">
        <id>Q13131</id>
        <label>PRKAA1</label>
    </interactant>
    <organismsDiffer>false</organismsDiffer>
    <experiments>12</experiments>
</comment>
<comment type="interaction">
    <interactant intactId="EBI-719769">
        <id>Q9Y478</id>
    </interactant>
    <interactant intactId="EBI-1383852">
        <id>P54646</id>
        <label>PRKAA2</label>
    </interactant>
    <organismsDiffer>false</organismsDiffer>
    <experiments>10</experiments>
</comment>
<comment type="interaction">
    <interactant intactId="EBI-719769">
        <id>Q9Y478</id>
    </interactant>
    <interactant intactId="EBI-1181439">
        <id>P54619</id>
        <label>PRKAG1</label>
    </interactant>
    <organismsDiffer>false</organismsDiffer>
    <experiments>14</experiments>
</comment>
<comment type="interaction">
    <interactant intactId="EBI-719769">
        <id>Q9Y478</id>
    </interactant>
    <interactant intactId="EBI-908831">
        <id>O75385</id>
        <label>ULK1</label>
    </interactant>
    <organismsDiffer>false</organismsDiffer>
    <experiments>3</experiments>
</comment>
<comment type="interaction">
    <interactant intactId="EBI-719769">
        <id>Q9Y478</id>
    </interactant>
    <interactant intactId="EBI-7927848">
        <id>O70302</id>
        <label>Cidea</label>
    </interactant>
    <organismsDiffer>true</organismsDiffer>
    <experiments>4</experiments>
</comment>
<comment type="domain">
    <text evidence="1">The glycogen-binding domain may target AMPK to glycogen so that other factors like glycogen-bound debranching enzyme or protein phosphatases can directly affect AMPK activity.</text>
</comment>
<comment type="PTM">
    <text evidence="7">Phosphorylated when associated with the catalytic subunit (PRKAA1 or PRKAA2). Phosphorylated by ULK1; leading to negatively regulate AMPK activity and suggesting the existence of a regulatory feedback loop between ULK1 and AMPK.</text>
</comment>
<comment type="similarity">
    <text evidence="9">Belongs to the 5'-AMP-activated protein kinase beta subunit family.</text>
</comment>
<comment type="sequence caution" evidence="9">
    <conflict type="erroneous gene model prediction">
        <sequence resource="EMBL-CDS" id="AAB71326"/>
    </conflict>
</comment>
<comment type="sequence caution" evidence="9">
    <conflict type="frameshift">
        <sequence resource="EMBL-CDS" id="AAC98897"/>
    </conflict>
</comment>
<comment type="online information" name="Atlas of Genetics and Cytogenetics in Oncology and Haematology">
    <link uri="https://atlasgeneticsoncology.org/gene/44100/PRKAB1"/>
</comment>
<gene>
    <name type="primary">PRKAB1</name>
    <name type="synonym">AMPK</name>
</gene>
<evidence type="ECO:0000250" key="1"/>
<evidence type="ECO:0000250" key="2">
    <source>
        <dbReference type="UniProtKB" id="P80386"/>
    </source>
</evidence>
<evidence type="ECO:0000250" key="3">
    <source>
        <dbReference type="UniProtKB" id="Q9R078"/>
    </source>
</evidence>
<evidence type="ECO:0000256" key="4">
    <source>
        <dbReference type="SAM" id="MobiDB-lite"/>
    </source>
</evidence>
<evidence type="ECO:0000269" key="5">
    <source>
    </source>
</evidence>
<evidence type="ECO:0000269" key="6">
    <source>
    </source>
</evidence>
<evidence type="ECO:0000269" key="7">
    <source>
    </source>
</evidence>
<evidence type="ECO:0000269" key="8">
    <source>
    </source>
</evidence>
<evidence type="ECO:0000305" key="9"/>
<evidence type="ECO:0007744" key="10">
    <source>
    </source>
</evidence>
<evidence type="ECO:0007744" key="11">
    <source>
    </source>
</evidence>
<evidence type="ECO:0007744" key="12">
    <source>
    </source>
</evidence>
<evidence type="ECO:0007744" key="13">
    <source>
    </source>
</evidence>
<evidence type="ECO:0007744" key="14">
    <source>
    </source>
</evidence>
<evidence type="ECO:0007744" key="15">
    <source>
    </source>
</evidence>
<evidence type="ECO:0007744" key="16">
    <source>
    </source>
</evidence>
<evidence type="ECO:0007744" key="17">
    <source>
    </source>
</evidence>
<evidence type="ECO:0007744" key="18">
    <source>
    </source>
</evidence>
<evidence type="ECO:0007829" key="19">
    <source>
        <dbReference type="PDB" id="4CFE"/>
    </source>
</evidence>
<evidence type="ECO:0007829" key="20">
    <source>
        <dbReference type="PDB" id="6C9G"/>
    </source>
</evidence>
<evidence type="ECO:0007829" key="21">
    <source>
        <dbReference type="PDB" id="7MYJ"/>
    </source>
</evidence>
<evidence type="ECO:0007829" key="22">
    <source>
        <dbReference type="PDB" id="8BIK"/>
    </source>
</evidence>
<protein>
    <recommendedName>
        <fullName>5'-AMP-activated protein kinase subunit beta-1</fullName>
        <shortName>AMPK subunit beta-1</shortName>
        <shortName>AMPKb</shortName>
    </recommendedName>
</protein>
<organism>
    <name type="scientific">Homo sapiens</name>
    <name type="common">Human</name>
    <dbReference type="NCBI Taxonomy" id="9606"/>
    <lineage>
        <taxon>Eukaryota</taxon>
        <taxon>Metazoa</taxon>
        <taxon>Chordata</taxon>
        <taxon>Craniata</taxon>
        <taxon>Vertebrata</taxon>
        <taxon>Euteleostomi</taxon>
        <taxon>Mammalia</taxon>
        <taxon>Eutheria</taxon>
        <taxon>Euarchontoglires</taxon>
        <taxon>Primates</taxon>
        <taxon>Haplorrhini</taxon>
        <taxon>Catarrhini</taxon>
        <taxon>Hominidae</taxon>
        <taxon>Homo</taxon>
    </lineage>
</organism>
<proteinExistence type="evidence at protein level"/>
<accession>Q9Y478</accession>
<accession>Q9UBV0</accession>
<accession>Q9UE20</accession>
<accession>Q9UEX2</accession>
<accession>Q9Y6V8</accession>
<dbReference type="EMBL" id="AJ224515">
    <property type="protein sequence ID" value="CAA12024.1"/>
    <property type="molecule type" value="mRNA"/>
</dbReference>
<dbReference type="EMBL" id="Y12556">
    <property type="protein sequence ID" value="CAA73146.1"/>
    <property type="molecule type" value="mRNA"/>
</dbReference>
<dbReference type="EMBL" id="U83994">
    <property type="protein sequence ID" value="AAD09237.1"/>
    <property type="molecule type" value="mRNA"/>
</dbReference>
<dbReference type="EMBL" id="U87276">
    <property type="protein sequence ID" value="AAD00625.1"/>
    <property type="molecule type" value="Genomic_DNA"/>
</dbReference>
<dbReference type="EMBL" id="U87271">
    <property type="protein sequence ID" value="AAD00625.1"/>
    <property type="status" value="JOINED"/>
    <property type="molecule type" value="Genomic_DNA"/>
</dbReference>
<dbReference type="EMBL" id="U87272">
    <property type="protein sequence ID" value="AAD00625.1"/>
    <property type="status" value="JOINED"/>
    <property type="molecule type" value="Genomic_DNA"/>
</dbReference>
<dbReference type="EMBL" id="U87273">
    <property type="protein sequence ID" value="AAD00625.1"/>
    <property type="status" value="JOINED"/>
    <property type="molecule type" value="Genomic_DNA"/>
</dbReference>
<dbReference type="EMBL" id="U87274">
    <property type="protein sequence ID" value="AAD00625.1"/>
    <property type="status" value="JOINED"/>
    <property type="molecule type" value="Genomic_DNA"/>
</dbReference>
<dbReference type="EMBL" id="U87275">
    <property type="protein sequence ID" value="AAD00625.1"/>
    <property type="status" value="JOINED"/>
    <property type="molecule type" value="Genomic_DNA"/>
</dbReference>
<dbReference type="EMBL" id="AF022116">
    <property type="protein sequence ID" value="AAC98897.1"/>
    <property type="status" value="ALT_FRAME"/>
    <property type="molecule type" value="mRNA"/>
</dbReference>
<dbReference type="EMBL" id="AC002563">
    <property type="protein sequence ID" value="AAB71326.1"/>
    <property type="status" value="ALT_SEQ"/>
    <property type="molecule type" value="Genomic_DNA"/>
</dbReference>
<dbReference type="EMBL" id="BC001007">
    <property type="protein sequence ID" value="AAH01007.1"/>
    <property type="molecule type" value="mRNA"/>
</dbReference>
<dbReference type="EMBL" id="BC001056">
    <property type="protein sequence ID" value="AAH01056.1"/>
    <property type="molecule type" value="mRNA"/>
</dbReference>
<dbReference type="EMBL" id="BC001823">
    <property type="protein sequence ID" value="AAH01823.1"/>
    <property type="molecule type" value="mRNA"/>
</dbReference>
<dbReference type="EMBL" id="BC017671">
    <property type="protein sequence ID" value="AAH17671.1"/>
    <property type="molecule type" value="mRNA"/>
</dbReference>
<dbReference type="CCDS" id="CCDS9191.1"/>
<dbReference type="PIR" id="T09514">
    <property type="entry name" value="T09514"/>
</dbReference>
<dbReference type="RefSeq" id="NP_006244.2">
    <property type="nucleotide sequence ID" value="NM_006253.4"/>
</dbReference>
<dbReference type="RefSeq" id="XP_005253966.1">
    <property type="nucleotide sequence ID" value="XM_005253909.2"/>
</dbReference>
<dbReference type="RefSeq" id="XP_054228496.1">
    <property type="nucleotide sequence ID" value="XM_054372521.1"/>
</dbReference>
<dbReference type="PDB" id="4CFE">
    <property type="method" value="X-ray"/>
    <property type="resolution" value="3.02 A"/>
    <property type="chains" value="B/D=1-270"/>
</dbReference>
<dbReference type="PDB" id="4CFF">
    <property type="method" value="X-ray"/>
    <property type="resolution" value="3.92 A"/>
    <property type="chains" value="B/D=1-270"/>
</dbReference>
<dbReference type="PDB" id="4ZHX">
    <property type="method" value="X-ray"/>
    <property type="resolution" value="2.99 A"/>
    <property type="chains" value="B/D=1-270"/>
</dbReference>
<dbReference type="PDB" id="5EZV">
    <property type="method" value="X-ray"/>
    <property type="resolution" value="2.99 A"/>
    <property type="chains" value="B/D=1-270"/>
</dbReference>
<dbReference type="PDB" id="5ISO">
    <property type="method" value="X-ray"/>
    <property type="resolution" value="2.63 A"/>
    <property type="chains" value="B/D=1-270"/>
</dbReference>
<dbReference type="PDB" id="6B1U">
    <property type="method" value="X-ray"/>
    <property type="resolution" value="2.77 A"/>
    <property type="chains" value="B/D=1-270"/>
</dbReference>
<dbReference type="PDB" id="6C9F">
    <property type="method" value="X-ray"/>
    <property type="resolution" value="2.92 A"/>
    <property type="chains" value="B=68-270"/>
</dbReference>
<dbReference type="PDB" id="6C9G">
    <property type="method" value="X-ray"/>
    <property type="resolution" value="2.70 A"/>
    <property type="chains" value="B=67-270"/>
</dbReference>
<dbReference type="PDB" id="6C9H">
    <property type="method" value="X-ray"/>
    <property type="resolution" value="2.65 A"/>
    <property type="chains" value="B=68-270"/>
</dbReference>
<dbReference type="PDB" id="6C9J">
    <property type="method" value="X-ray"/>
    <property type="resolution" value="3.05 A"/>
    <property type="chains" value="B=68-270"/>
</dbReference>
<dbReference type="PDB" id="7MYJ">
    <property type="method" value="X-ray"/>
    <property type="resolution" value="2.95 A"/>
    <property type="chains" value="B/D=1-270"/>
</dbReference>
<dbReference type="PDB" id="8BIK">
    <property type="method" value="X-ray"/>
    <property type="resolution" value="2.50 A"/>
    <property type="chains" value="B/E=1-270"/>
</dbReference>
<dbReference type="PDBsum" id="4CFE"/>
<dbReference type="PDBsum" id="4CFF"/>
<dbReference type="PDBsum" id="4ZHX"/>
<dbReference type="PDBsum" id="5EZV"/>
<dbReference type="PDBsum" id="5ISO"/>
<dbReference type="PDBsum" id="6B1U"/>
<dbReference type="PDBsum" id="6C9F"/>
<dbReference type="PDBsum" id="6C9G"/>
<dbReference type="PDBsum" id="6C9H"/>
<dbReference type="PDBsum" id="6C9J"/>
<dbReference type="PDBsum" id="7MYJ"/>
<dbReference type="PDBsum" id="8BIK"/>
<dbReference type="SMR" id="Q9Y478"/>
<dbReference type="BioGRID" id="111551">
    <property type="interactions" value="105"/>
</dbReference>
<dbReference type="ComplexPortal" id="CPX-5633">
    <property type="entry name" value="AMPK complex, alpha1-beta1-gamma1 variant"/>
</dbReference>
<dbReference type="ComplexPortal" id="CPX-5786">
    <property type="entry name" value="AMPK complex, alpha1-beta1-gamma2 variant"/>
</dbReference>
<dbReference type="ComplexPortal" id="CPX-5787">
    <property type="entry name" value="AMPK complex, alpha2-beta1-gamma1 variant"/>
</dbReference>
<dbReference type="ComplexPortal" id="CPX-5842">
    <property type="entry name" value="AMPK complex, alpha1-beta1-gamma3 variant"/>
</dbReference>
<dbReference type="ComplexPortal" id="CPX-5843">
    <property type="entry name" value="AMPK complex, alpha2-beta1-gamma3 variant"/>
</dbReference>
<dbReference type="ComplexPortal" id="CPX-5844">
    <property type="entry name" value="AMPK complex, alpha2-beta1-gamma2 variant"/>
</dbReference>
<dbReference type="CORUM" id="Q9Y478"/>
<dbReference type="DIP" id="DIP-39736N"/>
<dbReference type="FunCoup" id="Q9Y478">
    <property type="interactions" value="3116"/>
</dbReference>
<dbReference type="IntAct" id="Q9Y478">
    <property type="interactions" value="50"/>
</dbReference>
<dbReference type="MINT" id="Q9Y478"/>
<dbReference type="STRING" id="9606.ENSP00000441369"/>
<dbReference type="BindingDB" id="Q9Y478"/>
<dbReference type="ChEMBL" id="CHEMBL3847"/>
<dbReference type="DrugBank" id="DB08039">
    <property type="generic name" value="(3Z)-N,N-DIMETHYL-2-OXO-3-(4,5,6,7-TETRAHYDRO-1H-INDOL-2-YLMETHYLIDENE)-2,3-DIHYDRO-1H-INDOLE-5-SULFONAMIDE"/>
</dbReference>
<dbReference type="DrugBank" id="DB04944">
    <property type="generic name" value="Acadesine"/>
</dbReference>
<dbReference type="DrugBank" id="DB00945">
    <property type="generic name" value="Acetylsalicylic acid"/>
</dbReference>
<dbReference type="DrugBank" id="DB00131">
    <property type="generic name" value="Adenosine phosphate"/>
</dbReference>
<dbReference type="DrugBank" id="DB08597">
    <property type="generic name" value="Dorsomorphin"/>
</dbReference>
<dbReference type="DrugBank" id="DB12010">
    <property type="generic name" value="Fostamatinib"/>
</dbReference>
<dbReference type="DrugBank" id="DB12509">
    <property type="generic name" value="Imeglimin"/>
</dbReference>
<dbReference type="DrugBank" id="DB00331">
    <property type="generic name" value="Metformin"/>
</dbReference>
<dbReference type="DrugBank" id="DB00914">
    <property type="generic name" value="Phenformin"/>
</dbReference>
<dbReference type="DrugBank" id="DB04462">
    <property type="generic name" value="Tetrabromo-2-Benzotriazole"/>
</dbReference>
<dbReference type="DrugBank" id="DB00273">
    <property type="generic name" value="Topiramate"/>
</dbReference>
<dbReference type="DrugCentral" id="Q9Y478"/>
<dbReference type="GuidetoPHARMACOLOGY" id="1543"/>
<dbReference type="CAZy" id="CBM48">
    <property type="family name" value="Carbohydrate-Binding Module Family 48"/>
</dbReference>
<dbReference type="GlyGen" id="Q9Y478">
    <property type="glycosylation" value="1 site"/>
</dbReference>
<dbReference type="iPTMnet" id="Q9Y478"/>
<dbReference type="PhosphoSitePlus" id="Q9Y478"/>
<dbReference type="SwissPalm" id="Q9Y478"/>
<dbReference type="BioMuta" id="PRKAB1"/>
<dbReference type="DMDM" id="14194425"/>
<dbReference type="jPOST" id="Q9Y478"/>
<dbReference type="MassIVE" id="Q9Y478"/>
<dbReference type="PaxDb" id="9606-ENSP00000229328"/>
<dbReference type="PeptideAtlas" id="Q9Y478"/>
<dbReference type="ProteomicsDB" id="86122"/>
<dbReference type="Pumba" id="Q9Y478"/>
<dbReference type="Antibodypedia" id="1328">
    <property type="antibodies" value="829 antibodies from 42 providers"/>
</dbReference>
<dbReference type="DNASU" id="5564"/>
<dbReference type="Ensembl" id="ENST00000229328.10">
    <property type="protein sequence ID" value="ENSP00000229328.5"/>
    <property type="gene ID" value="ENSG00000111725.11"/>
</dbReference>
<dbReference type="Ensembl" id="ENST00000541640.5">
    <property type="protein sequence ID" value="ENSP00000441369.1"/>
    <property type="gene ID" value="ENSG00000111725.11"/>
</dbReference>
<dbReference type="GeneID" id="5564"/>
<dbReference type="KEGG" id="hsa:5564"/>
<dbReference type="MANE-Select" id="ENST00000229328.10">
    <property type="protein sequence ID" value="ENSP00000229328.5"/>
    <property type="RefSeq nucleotide sequence ID" value="NM_006253.5"/>
    <property type="RefSeq protein sequence ID" value="NP_006244.2"/>
</dbReference>
<dbReference type="UCSC" id="uc001txg.4">
    <property type="organism name" value="human"/>
</dbReference>
<dbReference type="AGR" id="HGNC:9378"/>
<dbReference type="CTD" id="5564"/>
<dbReference type="DisGeNET" id="5564"/>
<dbReference type="GeneCards" id="PRKAB1"/>
<dbReference type="HGNC" id="HGNC:9378">
    <property type="gene designation" value="PRKAB1"/>
</dbReference>
<dbReference type="HPA" id="ENSG00000111725">
    <property type="expression patterns" value="Low tissue specificity"/>
</dbReference>
<dbReference type="MIM" id="602740">
    <property type="type" value="gene"/>
</dbReference>
<dbReference type="neXtProt" id="NX_Q9Y478"/>
<dbReference type="OpenTargets" id="ENSG00000111725"/>
<dbReference type="PharmGKB" id="PA33746"/>
<dbReference type="VEuPathDB" id="HostDB:ENSG00000111725"/>
<dbReference type="eggNOG" id="KOG1616">
    <property type="taxonomic scope" value="Eukaryota"/>
</dbReference>
<dbReference type="GeneTree" id="ENSGT00940000155307"/>
<dbReference type="HOGENOM" id="CLU_070949_2_0_1"/>
<dbReference type="InParanoid" id="Q9Y478"/>
<dbReference type="OMA" id="QRTINAP"/>
<dbReference type="OrthoDB" id="531008at2759"/>
<dbReference type="PAN-GO" id="Q9Y478">
    <property type="GO annotations" value="5 GO annotations based on evolutionary models"/>
</dbReference>
<dbReference type="PhylomeDB" id="Q9Y478"/>
<dbReference type="TreeFam" id="TF313827"/>
<dbReference type="BRENDA" id="2.7.11.31">
    <property type="organism ID" value="2681"/>
</dbReference>
<dbReference type="PathwayCommons" id="Q9Y478"/>
<dbReference type="Reactome" id="R-HSA-1445148">
    <property type="pathway name" value="Translocation of SLC2A4 (GLUT4) to the plasma membrane"/>
</dbReference>
<dbReference type="Reactome" id="R-HSA-1632852">
    <property type="pathway name" value="Macroautophagy"/>
</dbReference>
<dbReference type="Reactome" id="R-HSA-2151209">
    <property type="pathway name" value="Activation of PPARGC1A (PGC-1alpha) by phosphorylation"/>
</dbReference>
<dbReference type="Reactome" id="R-HSA-380972">
    <property type="pathway name" value="Energy dependent regulation of mTOR by LKB1-AMPK"/>
</dbReference>
<dbReference type="Reactome" id="R-HSA-5628897">
    <property type="pathway name" value="TP53 Regulates Metabolic Genes"/>
</dbReference>
<dbReference type="Reactome" id="R-HSA-6804756">
    <property type="pathway name" value="Regulation of TP53 Activity through Phosphorylation"/>
</dbReference>
<dbReference type="Reactome" id="R-HSA-9613354">
    <property type="pathway name" value="Lipophagy"/>
</dbReference>
<dbReference type="Reactome" id="R-HSA-9619483">
    <property type="pathway name" value="Activation of AMPK downstream of NMDARs"/>
</dbReference>
<dbReference type="SignaLink" id="Q9Y478"/>
<dbReference type="SIGNOR" id="Q9Y478"/>
<dbReference type="BioGRID-ORCS" id="5564">
    <property type="hits" value="19 hits in 1176 CRISPR screens"/>
</dbReference>
<dbReference type="ChiTaRS" id="PRKAB1">
    <property type="organism name" value="human"/>
</dbReference>
<dbReference type="GeneWiki" id="PRKAB1"/>
<dbReference type="GenomeRNAi" id="5564"/>
<dbReference type="Pharos" id="Q9Y478">
    <property type="development level" value="Tchem"/>
</dbReference>
<dbReference type="PRO" id="PR:Q9Y478"/>
<dbReference type="Proteomes" id="UP000005640">
    <property type="component" value="Chromosome 12"/>
</dbReference>
<dbReference type="RNAct" id="Q9Y478">
    <property type="molecule type" value="protein"/>
</dbReference>
<dbReference type="Bgee" id="ENSG00000111725">
    <property type="expression patterns" value="Expressed in metanephros cortex and 178 other cell types or tissues"/>
</dbReference>
<dbReference type="ExpressionAtlas" id="Q9Y478">
    <property type="expression patterns" value="baseline and differential"/>
</dbReference>
<dbReference type="GO" id="GO:0005737">
    <property type="term" value="C:cytoplasm"/>
    <property type="evidence" value="ECO:0000318"/>
    <property type="project" value="GO_Central"/>
</dbReference>
<dbReference type="GO" id="GO:0005829">
    <property type="term" value="C:cytosol"/>
    <property type="evidence" value="ECO:0000304"/>
    <property type="project" value="Reactome"/>
</dbReference>
<dbReference type="GO" id="GO:0005654">
    <property type="term" value="C:nucleoplasm"/>
    <property type="evidence" value="ECO:0000304"/>
    <property type="project" value="Reactome"/>
</dbReference>
<dbReference type="GO" id="GO:0031588">
    <property type="term" value="C:nucleotide-activated protein kinase complex"/>
    <property type="evidence" value="ECO:0000353"/>
    <property type="project" value="ComplexPortal"/>
</dbReference>
<dbReference type="GO" id="GO:0005634">
    <property type="term" value="C:nucleus"/>
    <property type="evidence" value="ECO:0000314"/>
    <property type="project" value="ComplexPortal"/>
</dbReference>
<dbReference type="GO" id="GO:0019901">
    <property type="term" value="F:protein kinase binding"/>
    <property type="evidence" value="ECO:0000318"/>
    <property type="project" value="GO_Central"/>
</dbReference>
<dbReference type="GO" id="GO:0031669">
    <property type="term" value="P:cellular response to nutrient levels"/>
    <property type="evidence" value="ECO:0000314"/>
    <property type="project" value="ComplexPortal"/>
</dbReference>
<dbReference type="GO" id="GO:0006633">
    <property type="term" value="P:fatty acid biosynthetic process"/>
    <property type="evidence" value="ECO:0007669"/>
    <property type="project" value="UniProtKB-KW"/>
</dbReference>
<dbReference type="GO" id="GO:0035878">
    <property type="term" value="P:nail development"/>
    <property type="evidence" value="ECO:0007669"/>
    <property type="project" value="Ensembl"/>
</dbReference>
<dbReference type="GO" id="GO:0120162">
    <property type="term" value="P:positive regulation of cold-induced thermogenesis"/>
    <property type="evidence" value="ECO:0000250"/>
    <property type="project" value="YuBioLab"/>
</dbReference>
<dbReference type="GO" id="GO:0007165">
    <property type="term" value="P:signal transduction"/>
    <property type="evidence" value="ECO:0000318"/>
    <property type="project" value="GO_Central"/>
</dbReference>
<dbReference type="CDD" id="cd02859">
    <property type="entry name" value="E_set_AMPKbeta_like_N"/>
    <property type="match status" value="1"/>
</dbReference>
<dbReference type="FunFam" id="2.60.40.10:FF:000139">
    <property type="entry name" value="Protein kinase AMP-activated non-catalytic subunit beta 1"/>
    <property type="match status" value="1"/>
</dbReference>
<dbReference type="Gene3D" id="6.20.250.60">
    <property type="match status" value="1"/>
</dbReference>
<dbReference type="Gene3D" id="2.60.40.10">
    <property type="entry name" value="Immunoglobulins"/>
    <property type="match status" value="1"/>
</dbReference>
<dbReference type="IDEAL" id="IID00686"/>
<dbReference type="InterPro" id="IPR032640">
    <property type="entry name" value="AMPK1_CBM"/>
</dbReference>
<dbReference type="InterPro" id="IPR006828">
    <property type="entry name" value="ASC_dom"/>
</dbReference>
<dbReference type="InterPro" id="IPR037256">
    <property type="entry name" value="ASC_dom_sf"/>
</dbReference>
<dbReference type="InterPro" id="IPR050827">
    <property type="entry name" value="CRP1_MDG1_kinase"/>
</dbReference>
<dbReference type="InterPro" id="IPR013783">
    <property type="entry name" value="Ig-like_fold"/>
</dbReference>
<dbReference type="InterPro" id="IPR014756">
    <property type="entry name" value="Ig_E-set"/>
</dbReference>
<dbReference type="PANTHER" id="PTHR10343">
    <property type="entry name" value="5'-AMP-ACTIVATED PROTEIN KINASE , BETA SUBUNIT"/>
    <property type="match status" value="1"/>
</dbReference>
<dbReference type="PANTHER" id="PTHR10343:SF84">
    <property type="entry name" value="5'-AMP-ACTIVATED PROTEIN KINASE SUBUNIT BETA-1"/>
    <property type="match status" value="1"/>
</dbReference>
<dbReference type="Pfam" id="PF16561">
    <property type="entry name" value="AMPK1_CBM"/>
    <property type="match status" value="1"/>
</dbReference>
<dbReference type="Pfam" id="PF04739">
    <property type="entry name" value="AMPKBI"/>
    <property type="match status" value="1"/>
</dbReference>
<dbReference type="SMART" id="SM01010">
    <property type="entry name" value="AMPKBI"/>
    <property type="match status" value="1"/>
</dbReference>
<dbReference type="SUPFAM" id="SSF160219">
    <property type="entry name" value="AMPKBI-like"/>
    <property type="match status" value="1"/>
</dbReference>
<dbReference type="SUPFAM" id="SSF81296">
    <property type="entry name" value="E set domains"/>
    <property type="match status" value="1"/>
</dbReference>
<name>AAKB1_HUMAN</name>